<reference key="1">
    <citation type="journal article" date="1997" name="Nature">
        <title>The complete genome sequence of the hyperthermophilic, sulphate-reducing archaeon Archaeoglobus fulgidus.</title>
        <authorList>
            <person name="Klenk H.-P."/>
            <person name="Clayton R.A."/>
            <person name="Tomb J.-F."/>
            <person name="White O."/>
            <person name="Nelson K.E."/>
            <person name="Ketchum K.A."/>
            <person name="Dodson R.J."/>
            <person name="Gwinn M.L."/>
            <person name="Hickey E.K."/>
            <person name="Peterson J.D."/>
            <person name="Richardson D.L."/>
            <person name="Kerlavage A.R."/>
            <person name="Graham D.E."/>
            <person name="Kyrpides N.C."/>
            <person name="Fleischmann R.D."/>
            <person name="Quackenbush J."/>
            <person name="Lee N.H."/>
            <person name="Sutton G.G."/>
            <person name="Gill S.R."/>
            <person name="Kirkness E.F."/>
            <person name="Dougherty B.A."/>
            <person name="McKenney K."/>
            <person name="Adams M.D."/>
            <person name="Loftus B.J."/>
            <person name="Peterson S.N."/>
            <person name="Reich C.I."/>
            <person name="McNeil L.K."/>
            <person name="Badger J.H."/>
            <person name="Glodek A."/>
            <person name="Zhou L."/>
            <person name="Overbeek R."/>
            <person name="Gocayne J.D."/>
            <person name="Weidman J.F."/>
            <person name="McDonald L.A."/>
            <person name="Utterback T.R."/>
            <person name="Cotton M.D."/>
            <person name="Spriggs T."/>
            <person name="Artiach P."/>
            <person name="Kaine B.P."/>
            <person name="Sykes S.M."/>
            <person name="Sadow P.W."/>
            <person name="D'Andrea K.P."/>
            <person name="Bowman C."/>
            <person name="Fujii C."/>
            <person name="Garland S.A."/>
            <person name="Mason T.M."/>
            <person name="Olsen G.J."/>
            <person name="Fraser C.M."/>
            <person name="Smith H.O."/>
            <person name="Woese C.R."/>
            <person name="Venter J.C."/>
        </authorList>
    </citation>
    <scope>NUCLEOTIDE SEQUENCE [LARGE SCALE GENOMIC DNA]</scope>
    <source>
        <strain>ATCC 49558 / DSM 4304 / JCM 9628 / NBRC 100126 / VC-16</strain>
    </source>
</reference>
<name>Y1363_ARCFU</name>
<dbReference type="EMBL" id="AE000782">
    <property type="protein sequence ID" value="AAB89897.1"/>
    <property type="molecule type" value="Genomic_DNA"/>
</dbReference>
<dbReference type="PIR" id="B69420">
    <property type="entry name" value="B69420"/>
</dbReference>
<dbReference type="RefSeq" id="WP_010878860.1">
    <property type="nucleotide sequence ID" value="NC_000917.1"/>
</dbReference>
<dbReference type="SMR" id="O28908"/>
<dbReference type="STRING" id="224325.AF_1363"/>
<dbReference type="PaxDb" id="224325-AF_1363"/>
<dbReference type="DNASU" id="1484587"/>
<dbReference type="EnsemblBacteria" id="AAB89897">
    <property type="protein sequence ID" value="AAB89897"/>
    <property type="gene ID" value="AF_1363"/>
</dbReference>
<dbReference type="KEGG" id="afu:AF_1363"/>
<dbReference type="eggNOG" id="arCOG05763">
    <property type="taxonomic scope" value="Archaea"/>
</dbReference>
<dbReference type="HOGENOM" id="CLU_2534488_0_0_2"/>
<dbReference type="Proteomes" id="UP000002199">
    <property type="component" value="Chromosome"/>
</dbReference>
<dbReference type="InterPro" id="IPR018662">
    <property type="entry name" value="DUF2095"/>
</dbReference>
<dbReference type="Pfam" id="PF09868">
    <property type="entry name" value="DUF2095"/>
    <property type="match status" value="1"/>
</dbReference>
<comment type="similarity">
    <text evidence="1">To A.fulgidus AF_0255 and AF_1348.</text>
</comment>
<protein>
    <recommendedName>
        <fullName>Uncharacterized protein AF_1363</fullName>
    </recommendedName>
</protein>
<sequence>MEWKKEKFKKMFPNLFHEIEGSDLPTVLDHLEVCKTIEEAIEIIEYFEKRGEISKEYANFLKSNPSLLKSIIGTRERGEYTRRGLRD</sequence>
<evidence type="ECO:0000305" key="1"/>
<feature type="chain" id="PRO_0000127992" description="Uncharacterized protein AF_1363">
    <location>
        <begin position="1"/>
        <end position="87"/>
    </location>
</feature>
<organism>
    <name type="scientific">Archaeoglobus fulgidus (strain ATCC 49558 / DSM 4304 / JCM 9628 / NBRC 100126 / VC-16)</name>
    <dbReference type="NCBI Taxonomy" id="224325"/>
    <lineage>
        <taxon>Archaea</taxon>
        <taxon>Methanobacteriati</taxon>
        <taxon>Methanobacteriota</taxon>
        <taxon>Archaeoglobi</taxon>
        <taxon>Archaeoglobales</taxon>
        <taxon>Archaeoglobaceae</taxon>
        <taxon>Archaeoglobus</taxon>
    </lineage>
</organism>
<accession>O28908</accession>
<keyword id="KW-1185">Reference proteome</keyword>
<proteinExistence type="predicted"/>
<gene>
    <name type="ordered locus">AF_1363</name>
</gene>